<keyword id="KW-0285">Flavoprotein</keyword>
<keyword id="KW-0288">FMN</keyword>
<keyword id="KW-0520">NAD</keyword>
<keyword id="KW-0560">Oxidoreductase</keyword>
<dbReference type="EC" id="1.5.1.42" evidence="1"/>
<dbReference type="EMBL" id="CP000908">
    <property type="protein sequence ID" value="ABY31410.1"/>
    <property type="molecule type" value="Genomic_DNA"/>
</dbReference>
<dbReference type="RefSeq" id="WP_012254342.1">
    <property type="nucleotide sequence ID" value="NC_010172.1"/>
</dbReference>
<dbReference type="SMR" id="A9W6X8"/>
<dbReference type="KEGG" id="mex:Mext_3021"/>
<dbReference type="eggNOG" id="COG1853">
    <property type="taxonomic scope" value="Bacteria"/>
</dbReference>
<dbReference type="HOGENOM" id="CLU_059021_2_2_5"/>
<dbReference type="BioCyc" id="MEXT419610:MEXT_RS15210-MONOMER"/>
<dbReference type="GO" id="GO:0010181">
    <property type="term" value="F:FMN binding"/>
    <property type="evidence" value="ECO:0007669"/>
    <property type="project" value="InterPro"/>
</dbReference>
<dbReference type="GO" id="GO:0052874">
    <property type="term" value="F:FMN reductase (NADH) activity"/>
    <property type="evidence" value="ECO:0007669"/>
    <property type="project" value="UniProtKB-EC"/>
</dbReference>
<dbReference type="GO" id="GO:0008752">
    <property type="term" value="F:FMN reductase [NAD(P)H] activity"/>
    <property type="evidence" value="ECO:0007669"/>
    <property type="project" value="InterPro"/>
</dbReference>
<dbReference type="GO" id="GO:0042602">
    <property type="term" value="F:riboflavin reductase (NADPH) activity"/>
    <property type="evidence" value="ECO:0007669"/>
    <property type="project" value="UniProtKB-UniRule"/>
</dbReference>
<dbReference type="GO" id="GO:0019740">
    <property type="term" value="P:nitrogen utilization"/>
    <property type="evidence" value="ECO:0007669"/>
    <property type="project" value="UniProtKB-UniRule"/>
</dbReference>
<dbReference type="GO" id="GO:0006212">
    <property type="term" value="P:uracil catabolic process"/>
    <property type="evidence" value="ECO:0007669"/>
    <property type="project" value="UniProtKB-UniRule"/>
</dbReference>
<dbReference type="Gene3D" id="2.30.110.10">
    <property type="entry name" value="Electron Transport, Fmn-binding Protein, Chain A"/>
    <property type="match status" value="1"/>
</dbReference>
<dbReference type="HAMAP" id="MF_00833">
    <property type="entry name" value="RutF"/>
    <property type="match status" value="1"/>
</dbReference>
<dbReference type="InterPro" id="IPR002563">
    <property type="entry name" value="Flavin_Rdtase-like_dom"/>
</dbReference>
<dbReference type="InterPro" id="IPR050268">
    <property type="entry name" value="NADH-dep_flavin_reductase"/>
</dbReference>
<dbReference type="InterPro" id="IPR019917">
    <property type="entry name" value="RutF"/>
</dbReference>
<dbReference type="InterPro" id="IPR012349">
    <property type="entry name" value="Split_barrel_FMN-bd"/>
</dbReference>
<dbReference type="PANTHER" id="PTHR30466">
    <property type="entry name" value="FLAVIN REDUCTASE"/>
    <property type="match status" value="1"/>
</dbReference>
<dbReference type="PANTHER" id="PTHR30466:SF1">
    <property type="entry name" value="FMN REDUCTASE (NADH) RUTF"/>
    <property type="match status" value="1"/>
</dbReference>
<dbReference type="Pfam" id="PF01613">
    <property type="entry name" value="Flavin_Reduct"/>
    <property type="match status" value="1"/>
</dbReference>
<dbReference type="SMART" id="SM00903">
    <property type="entry name" value="Flavin_Reduct"/>
    <property type="match status" value="1"/>
</dbReference>
<dbReference type="SUPFAM" id="SSF50475">
    <property type="entry name" value="FMN-binding split barrel"/>
    <property type="match status" value="1"/>
</dbReference>
<name>RUTF2_METEP</name>
<comment type="function">
    <text evidence="1">Catalyzes the reduction of FMN to FMNH2 which is used to reduce pyrimidine by RutA via the Rut pathway.</text>
</comment>
<comment type="catalytic activity">
    <reaction evidence="1">
        <text>FMNH2 + NAD(+) = FMN + NADH + 2 H(+)</text>
        <dbReference type="Rhea" id="RHEA:21620"/>
        <dbReference type="ChEBI" id="CHEBI:15378"/>
        <dbReference type="ChEBI" id="CHEBI:57540"/>
        <dbReference type="ChEBI" id="CHEBI:57618"/>
        <dbReference type="ChEBI" id="CHEBI:57945"/>
        <dbReference type="ChEBI" id="CHEBI:58210"/>
        <dbReference type="EC" id="1.5.1.42"/>
    </reaction>
</comment>
<comment type="similarity">
    <text evidence="1">Belongs to the non-flavoprotein flavin reductase family. RutF subfamily.</text>
</comment>
<sequence length="172" mass="17932">MISSDPEAVSASAYREAMAQLASAVHLVTTDGPGGRAGLTATSVCSVSDGPPTLLVCLNRNSSAYPAFLRNGVLCINTLTAAHEGLATDFAGRVPQAERFAGPDWGRLQTGAPVLAGALVAFDCRIVDRHEVGTHDVLICAVEALAEISGAESLLYAGRHYRVLPRPDSESD</sequence>
<accession>A9W6X8</accession>
<reference key="1">
    <citation type="submission" date="2007-12" db="EMBL/GenBank/DDBJ databases">
        <title>Complete sequence of Methylobacterium extorquens PA1.</title>
        <authorList>
            <consortium name="US DOE Joint Genome Institute"/>
            <person name="Copeland A."/>
            <person name="Lucas S."/>
            <person name="Lapidus A."/>
            <person name="Barry K."/>
            <person name="Glavina del Rio T."/>
            <person name="Dalin E."/>
            <person name="Tice H."/>
            <person name="Pitluck S."/>
            <person name="Saunders E."/>
            <person name="Brettin T."/>
            <person name="Bruce D."/>
            <person name="Detter J.C."/>
            <person name="Han C."/>
            <person name="Schmutz J."/>
            <person name="Larimer F."/>
            <person name="Land M."/>
            <person name="Hauser L."/>
            <person name="Kyrpides N."/>
            <person name="Kim E."/>
            <person name="Marx C."/>
            <person name="Richardson P."/>
        </authorList>
    </citation>
    <scope>NUCLEOTIDE SEQUENCE [LARGE SCALE GENOMIC DNA]</scope>
    <source>
        <strain>PA1</strain>
    </source>
</reference>
<proteinExistence type="inferred from homology"/>
<organism>
    <name type="scientific">Methylorubrum extorquens (strain PA1)</name>
    <name type="common">Methylobacterium extorquens</name>
    <dbReference type="NCBI Taxonomy" id="419610"/>
    <lineage>
        <taxon>Bacteria</taxon>
        <taxon>Pseudomonadati</taxon>
        <taxon>Pseudomonadota</taxon>
        <taxon>Alphaproteobacteria</taxon>
        <taxon>Hyphomicrobiales</taxon>
        <taxon>Methylobacteriaceae</taxon>
        <taxon>Methylorubrum</taxon>
    </lineage>
</organism>
<protein>
    <recommendedName>
        <fullName evidence="1">FMN reductase (NADH) RutF 2</fullName>
        <ecNumber evidence="1">1.5.1.42</ecNumber>
    </recommendedName>
    <alternativeName>
        <fullName evidence="1">FMN reductase 2</fullName>
    </alternativeName>
    <alternativeName>
        <fullName evidence="1">NADH-flavin reductase RutF 2</fullName>
    </alternativeName>
    <alternativeName>
        <fullName evidence="1">NADH:flavin oxidoreductase 2</fullName>
    </alternativeName>
</protein>
<evidence type="ECO:0000255" key="1">
    <source>
        <dbReference type="HAMAP-Rule" id="MF_00833"/>
    </source>
</evidence>
<gene>
    <name evidence="1" type="primary">rutF2</name>
    <name type="ordered locus">Mext_3021</name>
</gene>
<feature type="chain" id="PRO_0000403036" description="FMN reductase (NADH) RutF 2">
    <location>
        <begin position="1"/>
        <end position="172"/>
    </location>
</feature>